<proteinExistence type="inferred from homology"/>
<protein>
    <recommendedName>
        <fullName evidence="1">GTPase Obg</fullName>
        <ecNumber evidence="1">3.6.5.-</ecNumber>
    </recommendedName>
    <alternativeName>
        <fullName evidence="1">GTP-binding protein Obg</fullName>
    </alternativeName>
</protein>
<name>OBG_RHOP2</name>
<gene>
    <name evidence="1" type="primary">obg</name>
    <name type="ordered locus">RPB_0251</name>
</gene>
<keyword id="KW-0963">Cytoplasm</keyword>
<keyword id="KW-0342">GTP-binding</keyword>
<keyword id="KW-0378">Hydrolase</keyword>
<keyword id="KW-0460">Magnesium</keyword>
<keyword id="KW-0479">Metal-binding</keyword>
<keyword id="KW-0547">Nucleotide-binding</keyword>
<keyword id="KW-1185">Reference proteome</keyword>
<accession>Q2J3J8</accession>
<sequence length="353" mass="37599">MKFLDEAKVYIRSGDGGNGCVAFRREKFIEFGGPNGGNGGRGGDVVVEAADGLNTLIDYRYQQHFKAQKGVNGMGSDRHGANGKAIVLKVPVGTQIFDEDKETLIHDFTTVGERFVLAEGGNGGFGNAHFKSSTNRAPRHANPGLPGEERWIWLRLKLIADAGLVGLPNAGKSTFLSKVSAAKPKIADYPFTTLHPQLGVVNADGREFVLADIPGLIEGAHEGAGLGDRFLGHVERCRVLLHLIDATCEHAGKAYKTVRGELEAYAETLADKIEIVALNKIDAVEPDELKKQKDRLKRAAKKTPLLISGITGQGVPEALRALAAVIGEAPVSDKAKGAADNAANAEPWAPQDA</sequence>
<comment type="function">
    <text evidence="1">An essential GTPase which binds GTP, GDP and possibly (p)ppGpp with moderate affinity, with high nucleotide exchange rates and a fairly low GTP hydrolysis rate. Plays a role in control of the cell cycle, stress response, ribosome biogenesis and in those bacteria that undergo differentiation, in morphogenesis control.</text>
</comment>
<comment type="cofactor">
    <cofactor evidence="1">
        <name>Mg(2+)</name>
        <dbReference type="ChEBI" id="CHEBI:18420"/>
    </cofactor>
</comment>
<comment type="subunit">
    <text evidence="1">Monomer.</text>
</comment>
<comment type="subcellular location">
    <subcellularLocation>
        <location evidence="1">Cytoplasm</location>
    </subcellularLocation>
</comment>
<comment type="similarity">
    <text evidence="1">Belongs to the TRAFAC class OBG-HflX-like GTPase superfamily. OBG GTPase family.</text>
</comment>
<feature type="chain" id="PRO_0000386194" description="GTPase Obg">
    <location>
        <begin position="1"/>
        <end position="353"/>
    </location>
</feature>
<feature type="domain" description="Obg" evidence="2">
    <location>
        <begin position="1"/>
        <end position="159"/>
    </location>
</feature>
<feature type="domain" description="OBG-type G" evidence="1">
    <location>
        <begin position="160"/>
        <end position="327"/>
    </location>
</feature>
<feature type="region of interest" description="Disordered" evidence="3">
    <location>
        <begin position="332"/>
        <end position="353"/>
    </location>
</feature>
<feature type="binding site" evidence="1">
    <location>
        <begin position="166"/>
        <end position="173"/>
    </location>
    <ligand>
        <name>GTP</name>
        <dbReference type="ChEBI" id="CHEBI:37565"/>
    </ligand>
</feature>
<feature type="binding site" evidence="1">
    <location>
        <position position="173"/>
    </location>
    <ligand>
        <name>Mg(2+)</name>
        <dbReference type="ChEBI" id="CHEBI:18420"/>
    </ligand>
</feature>
<feature type="binding site" evidence="1">
    <location>
        <begin position="191"/>
        <end position="195"/>
    </location>
    <ligand>
        <name>GTP</name>
        <dbReference type="ChEBI" id="CHEBI:37565"/>
    </ligand>
</feature>
<feature type="binding site" evidence="1">
    <location>
        <position position="193"/>
    </location>
    <ligand>
        <name>Mg(2+)</name>
        <dbReference type="ChEBI" id="CHEBI:18420"/>
    </ligand>
</feature>
<feature type="binding site" evidence="1">
    <location>
        <begin position="212"/>
        <end position="215"/>
    </location>
    <ligand>
        <name>GTP</name>
        <dbReference type="ChEBI" id="CHEBI:37565"/>
    </ligand>
</feature>
<feature type="binding site" evidence="1">
    <location>
        <begin position="279"/>
        <end position="282"/>
    </location>
    <ligand>
        <name>GTP</name>
        <dbReference type="ChEBI" id="CHEBI:37565"/>
    </ligand>
</feature>
<feature type="binding site" evidence="1">
    <location>
        <begin position="308"/>
        <end position="310"/>
    </location>
    <ligand>
        <name>GTP</name>
        <dbReference type="ChEBI" id="CHEBI:37565"/>
    </ligand>
</feature>
<evidence type="ECO:0000255" key="1">
    <source>
        <dbReference type="HAMAP-Rule" id="MF_01454"/>
    </source>
</evidence>
<evidence type="ECO:0000255" key="2">
    <source>
        <dbReference type="PROSITE-ProRule" id="PRU01231"/>
    </source>
</evidence>
<evidence type="ECO:0000256" key="3">
    <source>
        <dbReference type="SAM" id="MobiDB-lite"/>
    </source>
</evidence>
<dbReference type="EC" id="3.6.5.-" evidence="1"/>
<dbReference type="EMBL" id="CP000250">
    <property type="protein sequence ID" value="ABD04962.1"/>
    <property type="molecule type" value="Genomic_DNA"/>
</dbReference>
<dbReference type="RefSeq" id="WP_011439152.1">
    <property type="nucleotide sequence ID" value="NC_007778.1"/>
</dbReference>
<dbReference type="SMR" id="Q2J3J8"/>
<dbReference type="STRING" id="316058.RPB_0251"/>
<dbReference type="KEGG" id="rpb:RPB_0251"/>
<dbReference type="eggNOG" id="COG0536">
    <property type="taxonomic scope" value="Bacteria"/>
</dbReference>
<dbReference type="HOGENOM" id="CLU_011747_2_0_5"/>
<dbReference type="OrthoDB" id="9807318at2"/>
<dbReference type="Proteomes" id="UP000008809">
    <property type="component" value="Chromosome"/>
</dbReference>
<dbReference type="GO" id="GO:0005737">
    <property type="term" value="C:cytoplasm"/>
    <property type="evidence" value="ECO:0007669"/>
    <property type="project" value="UniProtKB-SubCell"/>
</dbReference>
<dbReference type="GO" id="GO:0005525">
    <property type="term" value="F:GTP binding"/>
    <property type="evidence" value="ECO:0007669"/>
    <property type="project" value="UniProtKB-UniRule"/>
</dbReference>
<dbReference type="GO" id="GO:0003924">
    <property type="term" value="F:GTPase activity"/>
    <property type="evidence" value="ECO:0007669"/>
    <property type="project" value="UniProtKB-UniRule"/>
</dbReference>
<dbReference type="GO" id="GO:0000287">
    <property type="term" value="F:magnesium ion binding"/>
    <property type="evidence" value="ECO:0007669"/>
    <property type="project" value="InterPro"/>
</dbReference>
<dbReference type="GO" id="GO:0042254">
    <property type="term" value="P:ribosome biogenesis"/>
    <property type="evidence" value="ECO:0007669"/>
    <property type="project" value="UniProtKB-UniRule"/>
</dbReference>
<dbReference type="CDD" id="cd01898">
    <property type="entry name" value="Obg"/>
    <property type="match status" value="1"/>
</dbReference>
<dbReference type="FunFam" id="2.70.210.12:FF:000001">
    <property type="entry name" value="GTPase Obg"/>
    <property type="match status" value="1"/>
</dbReference>
<dbReference type="Gene3D" id="2.70.210.12">
    <property type="entry name" value="GTP1/OBG domain"/>
    <property type="match status" value="1"/>
</dbReference>
<dbReference type="Gene3D" id="3.40.50.300">
    <property type="entry name" value="P-loop containing nucleotide triphosphate hydrolases"/>
    <property type="match status" value="1"/>
</dbReference>
<dbReference type="HAMAP" id="MF_01454">
    <property type="entry name" value="GTPase_Obg"/>
    <property type="match status" value="1"/>
</dbReference>
<dbReference type="InterPro" id="IPR031167">
    <property type="entry name" value="G_OBG"/>
</dbReference>
<dbReference type="InterPro" id="IPR006073">
    <property type="entry name" value="GTP-bd"/>
</dbReference>
<dbReference type="InterPro" id="IPR014100">
    <property type="entry name" value="GTP-bd_Obg/CgtA"/>
</dbReference>
<dbReference type="InterPro" id="IPR006074">
    <property type="entry name" value="GTP1-OBG_CS"/>
</dbReference>
<dbReference type="InterPro" id="IPR006169">
    <property type="entry name" value="GTP1_OBG_dom"/>
</dbReference>
<dbReference type="InterPro" id="IPR036726">
    <property type="entry name" value="GTP1_OBG_dom_sf"/>
</dbReference>
<dbReference type="InterPro" id="IPR045086">
    <property type="entry name" value="OBG_GTPase"/>
</dbReference>
<dbReference type="InterPro" id="IPR027417">
    <property type="entry name" value="P-loop_NTPase"/>
</dbReference>
<dbReference type="NCBIfam" id="TIGR02729">
    <property type="entry name" value="Obg_CgtA"/>
    <property type="match status" value="1"/>
</dbReference>
<dbReference type="NCBIfam" id="NF008955">
    <property type="entry name" value="PRK12297.1"/>
    <property type="match status" value="1"/>
</dbReference>
<dbReference type="NCBIfam" id="NF008956">
    <property type="entry name" value="PRK12299.1"/>
    <property type="match status" value="1"/>
</dbReference>
<dbReference type="PANTHER" id="PTHR11702">
    <property type="entry name" value="DEVELOPMENTALLY REGULATED GTP-BINDING PROTEIN-RELATED"/>
    <property type="match status" value="1"/>
</dbReference>
<dbReference type="PANTHER" id="PTHR11702:SF31">
    <property type="entry name" value="MITOCHONDRIAL RIBOSOME-ASSOCIATED GTPASE 2"/>
    <property type="match status" value="1"/>
</dbReference>
<dbReference type="Pfam" id="PF01018">
    <property type="entry name" value="GTP1_OBG"/>
    <property type="match status" value="1"/>
</dbReference>
<dbReference type="Pfam" id="PF01926">
    <property type="entry name" value="MMR_HSR1"/>
    <property type="match status" value="1"/>
</dbReference>
<dbReference type="PIRSF" id="PIRSF002401">
    <property type="entry name" value="GTP_bd_Obg/CgtA"/>
    <property type="match status" value="1"/>
</dbReference>
<dbReference type="PRINTS" id="PR00326">
    <property type="entry name" value="GTP1OBG"/>
</dbReference>
<dbReference type="SUPFAM" id="SSF82051">
    <property type="entry name" value="Obg GTP-binding protein N-terminal domain"/>
    <property type="match status" value="1"/>
</dbReference>
<dbReference type="SUPFAM" id="SSF52540">
    <property type="entry name" value="P-loop containing nucleoside triphosphate hydrolases"/>
    <property type="match status" value="1"/>
</dbReference>
<dbReference type="PROSITE" id="PS51710">
    <property type="entry name" value="G_OBG"/>
    <property type="match status" value="1"/>
</dbReference>
<dbReference type="PROSITE" id="PS00905">
    <property type="entry name" value="GTP1_OBG"/>
    <property type="match status" value="1"/>
</dbReference>
<dbReference type="PROSITE" id="PS51883">
    <property type="entry name" value="OBG"/>
    <property type="match status" value="1"/>
</dbReference>
<organism>
    <name type="scientific">Rhodopseudomonas palustris (strain HaA2)</name>
    <dbReference type="NCBI Taxonomy" id="316058"/>
    <lineage>
        <taxon>Bacteria</taxon>
        <taxon>Pseudomonadati</taxon>
        <taxon>Pseudomonadota</taxon>
        <taxon>Alphaproteobacteria</taxon>
        <taxon>Hyphomicrobiales</taxon>
        <taxon>Nitrobacteraceae</taxon>
        <taxon>Rhodopseudomonas</taxon>
    </lineage>
</organism>
<reference key="1">
    <citation type="submission" date="2006-01" db="EMBL/GenBank/DDBJ databases">
        <title>Complete sequence of Rhodopseudomonas palustris HaA2.</title>
        <authorList>
            <consortium name="US DOE Joint Genome Institute"/>
            <person name="Copeland A."/>
            <person name="Lucas S."/>
            <person name="Lapidus A."/>
            <person name="Barry K."/>
            <person name="Detter J.C."/>
            <person name="Glavina T."/>
            <person name="Hammon N."/>
            <person name="Israni S."/>
            <person name="Pitluck S."/>
            <person name="Chain P."/>
            <person name="Malfatti S."/>
            <person name="Shin M."/>
            <person name="Vergez L."/>
            <person name="Schmutz J."/>
            <person name="Larimer F."/>
            <person name="Land M."/>
            <person name="Hauser L."/>
            <person name="Pelletier D.A."/>
            <person name="Kyrpides N."/>
            <person name="Anderson I."/>
            <person name="Oda Y."/>
            <person name="Harwood C.S."/>
            <person name="Richardson P."/>
        </authorList>
    </citation>
    <scope>NUCLEOTIDE SEQUENCE [LARGE SCALE GENOMIC DNA]</scope>
    <source>
        <strain>HaA2</strain>
    </source>
</reference>